<evidence type="ECO:0000255" key="1">
    <source>
        <dbReference type="HAMAP-Rule" id="MF_00105"/>
    </source>
</evidence>
<sequence length="158" mass="17361">MSKVSYYTADGLKKLKDELEHLKSVMRPKASQDIADARDKGDLSENAEYDAAKEAQGLLEMRIAKLEEVYANARLIDESQLDVSKVLVLSNVKIKNQSNGMEMKYTLVAESEADLKTGKISVTSPIGKGLLGKSVGEIAEITVPNGTLKFEILEITRE</sequence>
<gene>
    <name evidence="1" type="primary">greA</name>
    <name type="ordered locus">Fjoh_1590</name>
</gene>
<protein>
    <recommendedName>
        <fullName evidence="1">Transcription elongation factor GreA</fullName>
    </recommendedName>
    <alternativeName>
        <fullName evidence="1">Transcript cleavage factor GreA</fullName>
    </alternativeName>
</protein>
<proteinExistence type="inferred from homology"/>
<organism>
    <name type="scientific">Flavobacterium johnsoniae (strain ATCC 17061 / DSM 2064 / JCM 8514 / BCRC 14874 / CCUG 350202 / NBRC 14942 / NCIMB 11054 / UW101)</name>
    <name type="common">Cytophaga johnsonae</name>
    <dbReference type="NCBI Taxonomy" id="376686"/>
    <lineage>
        <taxon>Bacteria</taxon>
        <taxon>Pseudomonadati</taxon>
        <taxon>Bacteroidota</taxon>
        <taxon>Flavobacteriia</taxon>
        <taxon>Flavobacteriales</taxon>
        <taxon>Flavobacteriaceae</taxon>
        <taxon>Flavobacterium</taxon>
    </lineage>
</organism>
<reference key="1">
    <citation type="journal article" date="2009" name="Appl. Environ. Microbiol.">
        <title>Novel features of the polysaccharide-digesting gliding bacterium Flavobacterium johnsoniae as revealed by genome sequence analysis.</title>
        <authorList>
            <person name="McBride M.J."/>
            <person name="Xie G."/>
            <person name="Martens E.C."/>
            <person name="Lapidus A."/>
            <person name="Henrissat B."/>
            <person name="Rhodes R.G."/>
            <person name="Goltsman E."/>
            <person name="Wang W."/>
            <person name="Xu J."/>
            <person name="Hunnicutt D.W."/>
            <person name="Staroscik A.M."/>
            <person name="Hoover T.R."/>
            <person name="Cheng Y.Q."/>
            <person name="Stein J.L."/>
        </authorList>
    </citation>
    <scope>NUCLEOTIDE SEQUENCE [LARGE SCALE GENOMIC DNA]</scope>
    <source>
        <strain>ATCC 17061 / DSM 2064 / JCM 8514 / BCRC 14874 / CCUG 350202 / NBRC 14942 / NCIMB 11054 / UW101</strain>
    </source>
</reference>
<accession>A5FJJ8</accession>
<dbReference type="EMBL" id="CP000685">
    <property type="protein sequence ID" value="ABQ04622.1"/>
    <property type="molecule type" value="Genomic_DNA"/>
</dbReference>
<dbReference type="RefSeq" id="WP_012023666.1">
    <property type="nucleotide sequence ID" value="NZ_MUGZ01000017.1"/>
</dbReference>
<dbReference type="SMR" id="A5FJJ8"/>
<dbReference type="STRING" id="376686.Fjoh_1590"/>
<dbReference type="KEGG" id="fjo:Fjoh_1590"/>
<dbReference type="eggNOG" id="COG0782">
    <property type="taxonomic scope" value="Bacteria"/>
</dbReference>
<dbReference type="HOGENOM" id="CLU_101379_2_0_10"/>
<dbReference type="OrthoDB" id="9808774at2"/>
<dbReference type="Proteomes" id="UP000006694">
    <property type="component" value="Chromosome"/>
</dbReference>
<dbReference type="GO" id="GO:0003677">
    <property type="term" value="F:DNA binding"/>
    <property type="evidence" value="ECO:0007669"/>
    <property type="project" value="UniProtKB-UniRule"/>
</dbReference>
<dbReference type="GO" id="GO:0070063">
    <property type="term" value="F:RNA polymerase binding"/>
    <property type="evidence" value="ECO:0007669"/>
    <property type="project" value="InterPro"/>
</dbReference>
<dbReference type="GO" id="GO:0006354">
    <property type="term" value="P:DNA-templated transcription elongation"/>
    <property type="evidence" value="ECO:0007669"/>
    <property type="project" value="TreeGrafter"/>
</dbReference>
<dbReference type="GO" id="GO:0032784">
    <property type="term" value="P:regulation of DNA-templated transcription elongation"/>
    <property type="evidence" value="ECO:0007669"/>
    <property type="project" value="UniProtKB-UniRule"/>
</dbReference>
<dbReference type="FunFam" id="1.10.287.180:FF:000001">
    <property type="entry name" value="Transcription elongation factor GreA"/>
    <property type="match status" value="1"/>
</dbReference>
<dbReference type="FunFam" id="3.10.50.30:FF:000001">
    <property type="entry name" value="Transcription elongation factor GreA"/>
    <property type="match status" value="1"/>
</dbReference>
<dbReference type="Gene3D" id="3.10.50.30">
    <property type="entry name" value="Transcription elongation factor, GreA/GreB, C-terminal domain"/>
    <property type="match status" value="1"/>
</dbReference>
<dbReference type="Gene3D" id="1.10.287.180">
    <property type="entry name" value="Transcription elongation factor, GreA/GreB, N-terminal domain"/>
    <property type="match status" value="1"/>
</dbReference>
<dbReference type="HAMAP" id="MF_00105">
    <property type="entry name" value="GreA_GreB"/>
    <property type="match status" value="1"/>
</dbReference>
<dbReference type="InterPro" id="IPR036953">
    <property type="entry name" value="GreA/GreB_C_sf"/>
</dbReference>
<dbReference type="InterPro" id="IPR018151">
    <property type="entry name" value="TF_GreA/GreB_CS"/>
</dbReference>
<dbReference type="InterPro" id="IPR006359">
    <property type="entry name" value="Tscrpt_elong_fac_GreA"/>
</dbReference>
<dbReference type="InterPro" id="IPR028624">
    <property type="entry name" value="Tscrpt_elong_fac_GreA/B"/>
</dbReference>
<dbReference type="InterPro" id="IPR001437">
    <property type="entry name" value="Tscrpt_elong_fac_GreA/B_C"/>
</dbReference>
<dbReference type="InterPro" id="IPR023459">
    <property type="entry name" value="Tscrpt_elong_fac_GreA/B_fam"/>
</dbReference>
<dbReference type="InterPro" id="IPR022691">
    <property type="entry name" value="Tscrpt_elong_fac_GreA/B_N"/>
</dbReference>
<dbReference type="InterPro" id="IPR036805">
    <property type="entry name" value="Tscrpt_elong_fac_GreA/B_N_sf"/>
</dbReference>
<dbReference type="NCBIfam" id="TIGR01462">
    <property type="entry name" value="greA"/>
    <property type="match status" value="1"/>
</dbReference>
<dbReference type="NCBIfam" id="NF001261">
    <property type="entry name" value="PRK00226.1-2"/>
    <property type="match status" value="1"/>
</dbReference>
<dbReference type="NCBIfam" id="NF001263">
    <property type="entry name" value="PRK00226.1-4"/>
    <property type="match status" value="1"/>
</dbReference>
<dbReference type="PANTHER" id="PTHR30437">
    <property type="entry name" value="TRANSCRIPTION ELONGATION FACTOR GREA"/>
    <property type="match status" value="1"/>
</dbReference>
<dbReference type="PANTHER" id="PTHR30437:SF4">
    <property type="entry name" value="TRANSCRIPTION ELONGATION FACTOR GREA"/>
    <property type="match status" value="1"/>
</dbReference>
<dbReference type="Pfam" id="PF01272">
    <property type="entry name" value="GreA_GreB"/>
    <property type="match status" value="1"/>
</dbReference>
<dbReference type="Pfam" id="PF03449">
    <property type="entry name" value="GreA_GreB_N"/>
    <property type="match status" value="1"/>
</dbReference>
<dbReference type="PIRSF" id="PIRSF006092">
    <property type="entry name" value="GreA_GreB"/>
    <property type="match status" value="1"/>
</dbReference>
<dbReference type="SUPFAM" id="SSF54534">
    <property type="entry name" value="FKBP-like"/>
    <property type="match status" value="1"/>
</dbReference>
<dbReference type="SUPFAM" id="SSF46557">
    <property type="entry name" value="GreA transcript cleavage protein, N-terminal domain"/>
    <property type="match status" value="1"/>
</dbReference>
<dbReference type="PROSITE" id="PS00830">
    <property type="entry name" value="GREAB_2"/>
    <property type="match status" value="1"/>
</dbReference>
<name>GREA_FLAJ1</name>
<feature type="chain" id="PRO_1000075871" description="Transcription elongation factor GreA">
    <location>
        <begin position="1"/>
        <end position="158"/>
    </location>
</feature>
<feature type="coiled-coil region" evidence="1">
    <location>
        <begin position="47"/>
        <end position="68"/>
    </location>
</feature>
<keyword id="KW-0175">Coiled coil</keyword>
<keyword id="KW-0238">DNA-binding</keyword>
<keyword id="KW-0804">Transcription</keyword>
<keyword id="KW-0805">Transcription regulation</keyword>
<comment type="function">
    <text evidence="1">Necessary for efficient RNA polymerase transcription elongation past template-encoded arresting sites. The arresting sites in DNA have the property of trapping a certain fraction of elongating RNA polymerases that pass through, resulting in locked ternary complexes. Cleavage of the nascent transcript by cleavage factors such as GreA or GreB allows the resumption of elongation from the new 3'terminus. GreA releases sequences of 2 to 3 nucleotides.</text>
</comment>
<comment type="similarity">
    <text evidence="1">Belongs to the GreA/GreB family.</text>
</comment>